<geneLocation type="chloroplast"/>
<proteinExistence type="inferred from homology"/>
<evidence type="ECO:0000255" key="1">
    <source>
        <dbReference type="HAMAP-Rule" id="MF_01456"/>
    </source>
</evidence>
<evidence type="ECO:0000312" key="2">
    <source>
        <dbReference type="Proteomes" id="UP000006591"/>
    </source>
</evidence>
<dbReference type="EC" id="7.1.1.-" evidence="1"/>
<dbReference type="EMBL" id="AP006728">
    <property type="protein sequence ID" value="BAD26847.1"/>
    <property type="molecule type" value="Genomic_DNA"/>
</dbReference>
<dbReference type="RefSeq" id="YP_052817.1">
    <property type="nucleotide sequence ID" value="NC_005973.1"/>
</dbReference>
<dbReference type="SMR" id="Q6ENA5"/>
<dbReference type="STRING" id="4536.Q6ENA5"/>
<dbReference type="GeneID" id="2885963"/>
<dbReference type="Proteomes" id="UP000006591">
    <property type="component" value="Chloroplast"/>
</dbReference>
<dbReference type="GO" id="GO:0009535">
    <property type="term" value="C:chloroplast thylakoid membrane"/>
    <property type="evidence" value="ECO:0007669"/>
    <property type="project" value="UniProtKB-SubCell"/>
</dbReference>
<dbReference type="GO" id="GO:0030964">
    <property type="term" value="C:NADH dehydrogenase complex"/>
    <property type="evidence" value="ECO:0007669"/>
    <property type="project" value="TreeGrafter"/>
</dbReference>
<dbReference type="GO" id="GO:0009536">
    <property type="term" value="C:plastid"/>
    <property type="evidence" value="ECO:0000305"/>
    <property type="project" value="Gramene"/>
</dbReference>
<dbReference type="GO" id="GO:0016655">
    <property type="term" value="F:oxidoreductase activity, acting on NAD(P)H, quinone or similar compound as acceptor"/>
    <property type="evidence" value="ECO:0007669"/>
    <property type="project" value="UniProtKB-UniRule"/>
</dbReference>
<dbReference type="GO" id="GO:0048038">
    <property type="term" value="F:quinone binding"/>
    <property type="evidence" value="ECO:0007669"/>
    <property type="project" value="UniProtKB-KW"/>
</dbReference>
<dbReference type="GO" id="GO:0042773">
    <property type="term" value="P:ATP synthesis coupled electron transport"/>
    <property type="evidence" value="ECO:0007669"/>
    <property type="project" value="InterPro"/>
</dbReference>
<dbReference type="GO" id="GO:0019684">
    <property type="term" value="P:photosynthesis, light reaction"/>
    <property type="evidence" value="ECO:0007669"/>
    <property type="project" value="UniProtKB-UniRule"/>
</dbReference>
<dbReference type="FunFam" id="1.10.287.3510:FF:000001">
    <property type="entry name" value="NADH-quinone oxidoreductase subunit K"/>
    <property type="match status" value="1"/>
</dbReference>
<dbReference type="Gene3D" id="1.10.287.3510">
    <property type="match status" value="1"/>
</dbReference>
<dbReference type="HAMAP" id="MF_01456">
    <property type="entry name" value="NDH1_NuoK"/>
    <property type="match status" value="1"/>
</dbReference>
<dbReference type="InterPro" id="IPR001133">
    <property type="entry name" value="NADH_UbQ_OxRdtase_chain4L/K"/>
</dbReference>
<dbReference type="InterPro" id="IPR039428">
    <property type="entry name" value="NUOK/Mnh_C1-like"/>
</dbReference>
<dbReference type="NCBIfam" id="NF004320">
    <property type="entry name" value="PRK05715.1-2"/>
    <property type="match status" value="1"/>
</dbReference>
<dbReference type="PANTHER" id="PTHR11434:SF16">
    <property type="entry name" value="NADH-UBIQUINONE OXIDOREDUCTASE CHAIN 4L"/>
    <property type="match status" value="1"/>
</dbReference>
<dbReference type="PANTHER" id="PTHR11434">
    <property type="entry name" value="NADH-UBIQUINONE OXIDOREDUCTASE SUBUNIT ND4L"/>
    <property type="match status" value="1"/>
</dbReference>
<dbReference type="Pfam" id="PF00420">
    <property type="entry name" value="Oxidored_q2"/>
    <property type="match status" value="1"/>
</dbReference>
<sequence>MMFEHVLFLSVYLFSIGIYGLITSRNMVRALICLELILNSINLNLVTFSDLFDSRQLKGDIFAIFVIALAAAEAAIGLSILSSIHRNRKSTRINQSNFLNN</sequence>
<organism>
    <name type="scientific">Oryza nivara</name>
    <name type="common">Indian wild rice</name>
    <name type="synonym">Oryza sativa f. spontanea</name>
    <dbReference type="NCBI Taxonomy" id="4536"/>
    <lineage>
        <taxon>Eukaryota</taxon>
        <taxon>Viridiplantae</taxon>
        <taxon>Streptophyta</taxon>
        <taxon>Embryophyta</taxon>
        <taxon>Tracheophyta</taxon>
        <taxon>Spermatophyta</taxon>
        <taxon>Magnoliopsida</taxon>
        <taxon>Liliopsida</taxon>
        <taxon>Poales</taxon>
        <taxon>Poaceae</taxon>
        <taxon>BOP clade</taxon>
        <taxon>Oryzoideae</taxon>
        <taxon>Oryzeae</taxon>
        <taxon>Oryzinae</taxon>
        <taxon>Oryza</taxon>
    </lineage>
</organism>
<accession>Q6ENA5</accession>
<gene>
    <name evidence="1" type="primary">ndhE</name>
</gene>
<name>NU4LC_ORYNI</name>
<reference key="1">
    <citation type="journal article" date="2004" name="Gene">
        <title>The complete nucleotide sequence of wild rice (Oryza nivara) chloroplast genome: first genome wide comparative sequence analysis of wild and cultivated rice.</title>
        <authorList>
            <person name="Masood M.S."/>
            <person name="Nishikawa T."/>
            <person name="Fukuoka S."/>
            <person name="Njenga P.K."/>
            <person name="Tsudzuki T."/>
            <person name="Kadowaki K."/>
        </authorList>
    </citation>
    <scope>NUCLEOTIDE SEQUENCE [LARGE SCALE GENOMIC DNA]</scope>
    <source>
        <strain evidence="2">cv. SL10</strain>
    </source>
</reference>
<feature type="chain" id="PRO_0000118513" description="NAD(P)H-quinone oxidoreductase subunit 4L, chloroplastic">
    <location>
        <begin position="1"/>
        <end position="101"/>
    </location>
</feature>
<feature type="transmembrane region" description="Helical" evidence="1">
    <location>
        <begin position="2"/>
        <end position="22"/>
    </location>
</feature>
<feature type="transmembrane region" description="Helical" evidence="1">
    <location>
        <begin position="32"/>
        <end position="52"/>
    </location>
</feature>
<feature type="transmembrane region" description="Helical" evidence="1">
    <location>
        <begin position="61"/>
        <end position="81"/>
    </location>
</feature>
<protein>
    <recommendedName>
        <fullName evidence="1">NAD(P)H-quinone oxidoreductase subunit 4L, chloroplastic</fullName>
        <ecNumber evidence="1">7.1.1.-</ecNumber>
    </recommendedName>
    <alternativeName>
        <fullName evidence="1">NAD(P)H dehydrogenase subunit 4L</fullName>
    </alternativeName>
    <alternativeName>
        <fullName evidence="1">NADH-plastoquinone oxidoreductase subunit 4L</fullName>
    </alternativeName>
</protein>
<keyword id="KW-0150">Chloroplast</keyword>
<keyword id="KW-0472">Membrane</keyword>
<keyword id="KW-0520">NAD</keyword>
<keyword id="KW-0521">NADP</keyword>
<keyword id="KW-0934">Plastid</keyword>
<keyword id="KW-0618">Plastoquinone</keyword>
<keyword id="KW-0874">Quinone</keyword>
<keyword id="KW-1185">Reference proteome</keyword>
<keyword id="KW-0793">Thylakoid</keyword>
<keyword id="KW-1278">Translocase</keyword>
<keyword id="KW-0812">Transmembrane</keyword>
<keyword id="KW-1133">Transmembrane helix</keyword>
<keyword id="KW-0813">Transport</keyword>
<comment type="function">
    <text evidence="1">NDH shuttles electrons from NAD(P)H:plastoquinone, via FMN and iron-sulfur (Fe-S) centers, to quinones in the photosynthetic chain and possibly in a chloroplast respiratory chain. The immediate electron acceptor for the enzyme in this species is believed to be plastoquinone. Couples the redox reaction to proton translocation, and thus conserves the redox energy in a proton gradient.</text>
</comment>
<comment type="catalytic activity">
    <reaction evidence="1">
        <text>a plastoquinone + NADH + (n+1) H(+)(in) = a plastoquinol + NAD(+) + n H(+)(out)</text>
        <dbReference type="Rhea" id="RHEA:42608"/>
        <dbReference type="Rhea" id="RHEA-COMP:9561"/>
        <dbReference type="Rhea" id="RHEA-COMP:9562"/>
        <dbReference type="ChEBI" id="CHEBI:15378"/>
        <dbReference type="ChEBI" id="CHEBI:17757"/>
        <dbReference type="ChEBI" id="CHEBI:57540"/>
        <dbReference type="ChEBI" id="CHEBI:57945"/>
        <dbReference type="ChEBI" id="CHEBI:62192"/>
    </reaction>
</comment>
<comment type="catalytic activity">
    <reaction evidence="1">
        <text>a plastoquinone + NADPH + (n+1) H(+)(in) = a plastoquinol + NADP(+) + n H(+)(out)</text>
        <dbReference type="Rhea" id="RHEA:42612"/>
        <dbReference type="Rhea" id="RHEA-COMP:9561"/>
        <dbReference type="Rhea" id="RHEA-COMP:9562"/>
        <dbReference type="ChEBI" id="CHEBI:15378"/>
        <dbReference type="ChEBI" id="CHEBI:17757"/>
        <dbReference type="ChEBI" id="CHEBI:57783"/>
        <dbReference type="ChEBI" id="CHEBI:58349"/>
        <dbReference type="ChEBI" id="CHEBI:62192"/>
    </reaction>
</comment>
<comment type="subunit">
    <text evidence="1">NDH is composed of at least 16 different subunits, 5 of which are encoded in the nucleus.</text>
</comment>
<comment type="subcellular location">
    <subcellularLocation>
        <location evidence="1">Plastid</location>
        <location evidence="1">Chloroplast thylakoid membrane</location>
        <topology evidence="1">Multi-pass membrane protein</topology>
    </subcellularLocation>
</comment>
<comment type="similarity">
    <text evidence="1">Belongs to the complex I subunit 4L family.</text>
</comment>